<accession>A0R2E2</accession>
<reference key="1">
    <citation type="submission" date="2006-10" db="EMBL/GenBank/DDBJ databases">
        <authorList>
            <person name="Fleischmann R.D."/>
            <person name="Dodson R.J."/>
            <person name="Haft D.H."/>
            <person name="Merkel J.S."/>
            <person name="Nelson W.C."/>
            <person name="Fraser C.M."/>
        </authorList>
    </citation>
    <scope>NUCLEOTIDE SEQUENCE [LARGE SCALE GENOMIC DNA]</scope>
    <source>
        <strain>ATCC 700084 / mc(2)155</strain>
    </source>
</reference>
<reference key="2">
    <citation type="journal article" date="2007" name="Genome Biol.">
        <title>Interrupted coding sequences in Mycobacterium smegmatis: authentic mutations or sequencing errors?</title>
        <authorList>
            <person name="Deshayes C."/>
            <person name="Perrodou E."/>
            <person name="Gallien S."/>
            <person name="Euphrasie D."/>
            <person name="Schaeffer C."/>
            <person name="Van-Dorsselaer A."/>
            <person name="Poch O."/>
            <person name="Lecompte O."/>
            <person name="Reyrat J.-M."/>
        </authorList>
    </citation>
    <scope>NUCLEOTIDE SEQUENCE [LARGE SCALE GENOMIC DNA]</scope>
    <source>
        <strain>ATCC 700084 / mc(2)155</strain>
    </source>
</reference>
<reference key="3">
    <citation type="journal article" date="2009" name="Genome Res.">
        <title>Ortho-proteogenomics: multiple proteomes investigation through orthology and a new MS-based protocol.</title>
        <authorList>
            <person name="Gallien S."/>
            <person name="Perrodou E."/>
            <person name="Carapito C."/>
            <person name="Deshayes C."/>
            <person name="Reyrat J.-M."/>
            <person name="Van Dorsselaer A."/>
            <person name="Poch O."/>
            <person name="Schaeffer C."/>
            <person name="Lecompte O."/>
        </authorList>
    </citation>
    <scope>NUCLEOTIDE SEQUENCE [LARGE SCALE GENOMIC DNA]</scope>
    <source>
        <strain>ATCC 700084 / mc(2)155</strain>
    </source>
</reference>
<reference key="4">
    <citation type="journal article" date="2016" name="PLoS Pathog.">
        <title>Metabolic network for the biosynthesis of intra- and extracellular alpha-glucans required for virulence of Mycobacterium tuberculosis.</title>
        <authorList>
            <person name="Koliwer-Brandl H."/>
            <person name="Syson K."/>
            <person name="van de Weerd R."/>
            <person name="Chandra G."/>
            <person name="Appelmelk B."/>
            <person name="Alber M."/>
            <person name="Ioerger T.R."/>
            <person name="Jacobs W.R. Jr."/>
            <person name="Geurtsen J."/>
            <person name="Bornemann S."/>
            <person name="Kalscheuer R."/>
        </authorList>
    </citation>
    <scope>FUNCTION</scope>
    <scope>CATALYTIC ACTIVITY</scope>
    <scope>DISRUPTION PHENOTYPE</scope>
    <scope>PATHWAY</scope>
</reference>
<comment type="function">
    <text evidence="1">Involved in the biosynthesis of the maltose-1-phosphate (M1P) building block required for alpha-glucan production by the key enzyme GlgE. Catalyzes the formation of an alpha-1,4 linkage between glucose from ADP-glucose and glucose 1-phosphate (G1P) to yield maltose-1-phosphate (M1P).</text>
</comment>
<comment type="catalytic activity">
    <reaction evidence="4">
        <text>ADP-alpha-D-glucose + alpha-D-glucose 1-phosphate = alpha-maltose 1-phosphate + ADP + H(+)</text>
        <dbReference type="Rhea" id="RHEA:50692"/>
        <dbReference type="ChEBI" id="CHEBI:15378"/>
        <dbReference type="ChEBI" id="CHEBI:57498"/>
        <dbReference type="ChEBI" id="CHEBI:58601"/>
        <dbReference type="ChEBI" id="CHEBI:63576"/>
        <dbReference type="ChEBI" id="CHEBI:456216"/>
        <dbReference type="EC" id="2.4.1.342"/>
    </reaction>
</comment>
<comment type="pathway">
    <text evidence="1">Glycan biosynthesis; glycogen biosynthesis.</text>
</comment>
<comment type="disruption phenotype">
    <text evidence="1">Cells lacking this gene do not show a discernible effect on alpha-glucan content and do not accumulate ADP-glucose. Combined inactivation of both glgM and glgB completely blocks alpha-glucan production. Combined inactivation of both glgM and ostA accumulates ADP-glucose. In the double mutant treS-glgE, inactivation of the glgM gene fully abolishes maltose 1-phosphate (M1P) production.</text>
</comment>
<comment type="miscellaneous">
    <text evidence="1">Maltose-1-phosphate (M1P) is generated by two alternative routes: the TreS-Pep2 branch and the GlgC-GlgM branch, however it seems that the GlgC-GlgM branch provides most of M1P for the GlgE pathway in M.smegmatis.</text>
</comment>
<comment type="similarity">
    <text evidence="3">Belongs to the glycosyltransferase group 1 family.</text>
</comment>
<proteinExistence type="evidence at protein level"/>
<gene>
    <name evidence="2" type="primary">glgM</name>
    <name type="synonym">glgA</name>
    <name evidence="5" type="ordered locus">MSMEG_5080</name>
    <name evidence="6" type="ordered locus">MSMEI_4954</name>
</gene>
<protein>
    <recommendedName>
        <fullName evidence="2">Alpha-maltose-1-phosphate synthase</fullName>
        <shortName evidence="2">M1P synthase</shortName>
        <ecNumber evidence="4">2.4.1.342</ecNumber>
    </recommendedName>
    <alternativeName>
        <fullName evidence="4">ADP-alpha-D-glucose:alpha-D-glucose-1-phosphate 4-alpha-D-glucosyltransferase</fullName>
    </alternativeName>
    <alternativeName>
        <fullName evidence="2">M1P-producing glucosyltransferase</fullName>
    </alternativeName>
</protein>
<keyword id="KW-0002">3D-structure</keyword>
<keyword id="KW-0119">Carbohydrate metabolism</keyword>
<keyword id="KW-0328">Glycosyltransferase</keyword>
<keyword id="KW-1185">Reference proteome</keyword>
<keyword id="KW-0808">Transferase</keyword>
<name>GLGM_MYCS2</name>
<organism>
    <name type="scientific">Mycolicibacterium smegmatis (strain ATCC 700084 / mc(2)155)</name>
    <name type="common">Mycobacterium smegmatis</name>
    <dbReference type="NCBI Taxonomy" id="246196"/>
    <lineage>
        <taxon>Bacteria</taxon>
        <taxon>Bacillati</taxon>
        <taxon>Actinomycetota</taxon>
        <taxon>Actinomycetes</taxon>
        <taxon>Mycobacteriales</taxon>
        <taxon>Mycobacteriaceae</taxon>
        <taxon>Mycolicibacterium</taxon>
    </lineage>
</organism>
<sequence length="387" mass="41679">MRVAMMTREYPPEVYGGAGVHVTELVAQLRKLCDVDVHCMGAPRDGAYVAHPDPTLRGANAALTMLSADLNMVNNAEAATVVHSHTWYTGLAGHLASLLYGVPHVLTAHSLEPLRPWKAEQLGGGYQVSSWVERTAVEAADAVIAVSSGMRDDVLRTYPALDPDRVHVVRNGIDTTVWYPAEPGPDESVLAELGVDLNRPIVAFVGRITRQKGVAHLVAAAHRFAPDVQLVLCAGAPDTPQIAEEVSSAVQQLAQARTGVFWVREMLPTHKIREILSAATVFVCPSVYEPLGIVNLEAMACATAVVASDVGGIPEVVADGRTGLLVHYDANDTEAYEARLAEAVNSLVADPDRAREYGVAGRERCIEEFSWAHIAEQTLEIYRKVSA</sequence>
<evidence type="ECO:0000269" key="1">
    <source>
    </source>
</evidence>
<evidence type="ECO:0000303" key="2">
    <source>
    </source>
</evidence>
<evidence type="ECO:0000305" key="3"/>
<evidence type="ECO:0000305" key="4">
    <source>
    </source>
</evidence>
<evidence type="ECO:0000312" key="5">
    <source>
        <dbReference type="EMBL" id="ABK70457.1"/>
    </source>
</evidence>
<evidence type="ECO:0000312" key="6">
    <source>
        <dbReference type="EMBL" id="AFP41398.1"/>
    </source>
</evidence>
<evidence type="ECO:0007829" key="7">
    <source>
        <dbReference type="PDB" id="6TVP"/>
    </source>
</evidence>
<feature type="chain" id="PRO_0000438836" description="Alpha-maltose-1-phosphate synthase">
    <location>
        <begin position="1"/>
        <end position="387"/>
    </location>
</feature>
<feature type="strand" evidence="7">
    <location>
        <begin position="2"/>
        <end position="6"/>
    </location>
</feature>
<feature type="helix" evidence="7">
    <location>
        <begin position="17"/>
        <end position="29"/>
    </location>
</feature>
<feature type="turn" evidence="7">
    <location>
        <begin position="30"/>
        <end position="32"/>
    </location>
</feature>
<feature type="strand" evidence="7">
    <location>
        <begin position="33"/>
        <end position="39"/>
    </location>
</feature>
<feature type="strand" evidence="7">
    <location>
        <begin position="47"/>
        <end position="49"/>
    </location>
</feature>
<feature type="helix" evidence="7">
    <location>
        <begin position="54"/>
        <end position="56"/>
    </location>
</feature>
<feature type="helix" evidence="7">
    <location>
        <begin position="61"/>
        <end position="75"/>
    </location>
</feature>
<feature type="turn" evidence="7">
    <location>
        <begin position="76"/>
        <end position="78"/>
    </location>
</feature>
<feature type="strand" evidence="7">
    <location>
        <begin position="80"/>
        <end position="86"/>
    </location>
</feature>
<feature type="helix" evidence="7">
    <location>
        <begin position="87"/>
        <end position="100"/>
    </location>
</feature>
<feature type="strand" evidence="7">
    <location>
        <begin position="104"/>
        <end position="107"/>
    </location>
</feature>
<feature type="helix" evidence="7">
    <location>
        <begin position="112"/>
        <end position="114"/>
    </location>
</feature>
<feature type="helix" evidence="7">
    <location>
        <begin position="119"/>
        <end position="122"/>
    </location>
</feature>
<feature type="helix" evidence="7">
    <location>
        <begin position="124"/>
        <end position="139"/>
    </location>
</feature>
<feature type="strand" evidence="7">
    <location>
        <begin position="141"/>
        <end position="147"/>
    </location>
</feature>
<feature type="helix" evidence="7">
    <location>
        <begin position="148"/>
        <end position="157"/>
    </location>
</feature>
<feature type="helix" evidence="7">
    <location>
        <begin position="163"/>
        <end position="165"/>
    </location>
</feature>
<feature type="strand" evidence="7">
    <location>
        <begin position="166"/>
        <end position="168"/>
    </location>
</feature>
<feature type="turn" evidence="7">
    <location>
        <begin position="175"/>
        <end position="177"/>
    </location>
</feature>
<feature type="helix" evidence="7">
    <location>
        <begin position="189"/>
        <end position="193"/>
    </location>
</feature>
<feature type="strand" evidence="7">
    <location>
        <begin position="201"/>
        <end position="207"/>
    </location>
</feature>
<feature type="helix" evidence="7">
    <location>
        <begin position="210"/>
        <end position="212"/>
    </location>
</feature>
<feature type="helix" evidence="7">
    <location>
        <begin position="214"/>
        <end position="221"/>
    </location>
</feature>
<feature type="strand" evidence="7">
    <location>
        <begin position="229"/>
        <end position="235"/>
    </location>
</feature>
<feature type="helix" evidence="7">
    <location>
        <begin position="240"/>
        <end position="256"/>
    </location>
</feature>
<feature type="strand" evidence="7">
    <location>
        <begin position="260"/>
        <end position="263"/>
    </location>
</feature>
<feature type="helix" evidence="7">
    <location>
        <begin position="269"/>
        <end position="278"/>
    </location>
</feature>
<feature type="strand" evidence="7">
    <location>
        <begin position="280"/>
        <end position="284"/>
    </location>
</feature>
<feature type="helix" evidence="7">
    <location>
        <begin position="293"/>
        <end position="300"/>
    </location>
</feature>
<feature type="strand" evidence="7">
    <location>
        <begin position="304"/>
        <end position="310"/>
    </location>
</feature>
<feature type="helix" evidence="7">
    <location>
        <begin position="313"/>
        <end position="316"/>
    </location>
</feature>
<feature type="turn" evidence="7">
    <location>
        <begin position="319"/>
        <end position="321"/>
    </location>
</feature>
<feature type="strand" evidence="7">
    <location>
        <begin position="322"/>
        <end position="326"/>
    </location>
</feature>
<feature type="helix" evidence="7">
    <location>
        <begin position="333"/>
        <end position="349"/>
    </location>
</feature>
<feature type="helix" evidence="7">
    <location>
        <begin position="351"/>
        <end position="368"/>
    </location>
</feature>
<feature type="helix" evidence="7">
    <location>
        <begin position="371"/>
        <end position="386"/>
    </location>
</feature>
<dbReference type="EC" id="2.4.1.342" evidence="4"/>
<dbReference type="EMBL" id="CP000480">
    <property type="protein sequence ID" value="ABK70457.1"/>
    <property type="molecule type" value="Genomic_DNA"/>
</dbReference>
<dbReference type="EMBL" id="CP001663">
    <property type="protein sequence ID" value="AFP41398.1"/>
    <property type="molecule type" value="Genomic_DNA"/>
</dbReference>
<dbReference type="RefSeq" id="WP_011730300.1">
    <property type="nucleotide sequence ID" value="NZ_SIJM01000019.1"/>
</dbReference>
<dbReference type="RefSeq" id="YP_889330.1">
    <property type="nucleotide sequence ID" value="NC_008596.1"/>
</dbReference>
<dbReference type="PDB" id="6TVP">
    <property type="method" value="X-ray"/>
    <property type="resolution" value="1.90 A"/>
    <property type="chains" value="A/B=1-387"/>
</dbReference>
<dbReference type="PDBsum" id="6TVP"/>
<dbReference type="SMR" id="A0R2E2"/>
<dbReference type="STRING" id="246196.MSMEG_5080"/>
<dbReference type="CAZy" id="GT4">
    <property type="family name" value="Glycosyltransferase Family 4"/>
</dbReference>
<dbReference type="PaxDb" id="246196-MSMEI_4954"/>
<dbReference type="GeneID" id="93459746"/>
<dbReference type="KEGG" id="msb:LJ00_25125"/>
<dbReference type="KEGG" id="msg:MSMEI_4954"/>
<dbReference type="KEGG" id="msm:MSMEG_5080"/>
<dbReference type="PATRIC" id="fig|246196.19.peg.4958"/>
<dbReference type="eggNOG" id="COG0297">
    <property type="taxonomic scope" value="Bacteria"/>
</dbReference>
<dbReference type="OrthoDB" id="6286688at2"/>
<dbReference type="BRENDA" id="2.4.1.342">
    <property type="organism ID" value="3512"/>
</dbReference>
<dbReference type="UniPathway" id="UPA00164"/>
<dbReference type="Proteomes" id="UP000000757">
    <property type="component" value="Chromosome"/>
</dbReference>
<dbReference type="Proteomes" id="UP000006158">
    <property type="component" value="Chromosome"/>
</dbReference>
<dbReference type="GO" id="GO:0016757">
    <property type="term" value="F:glycosyltransferase activity"/>
    <property type="evidence" value="ECO:0007669"/>
    <property type="project" value="UniProtKB-KW"/>
</dbReference>
<dbReference type="GO" id="GO:0005978">
    <property type="term" value="P:glycogen biosynthetic process"/>
    <property type="evidence" value="ECO:0007669"/>
    <property type="project" value="UniProtKB-UniPathway"/>
</dbReference>
<dbReference type="CDD" id="cd03801">
    <property type="entry name" value="GT4_PimA-like"/>
    <property type="match status" value="1"/>
</dbReference>
<dbReference type="Gene3D" id="3.40.50.2000">
    <property type="entry name" value="Glycogen Phosphorylase B"/>
    <property type="match status" value="2"/>
</dbReference>
<dbReference type="InterPro" id="IPR001296">
    <property type="entry name" value="Glyco_trans_1"/>
</dbReference>
<dbReference type="InterPro" id="IPR028098">
    <property type="entry name" value="Glyco_trans_4-like_N"/>
</dbReference>
<dbReference type="InterPro" id="IPR011875">
    <property type="entry name" value="M1P_synthase"/>
</dbReference>
<dbReference type="NCBIfam" id="TIGR02149">
    <property type="entry name" value="glgA_Coryne"/>
    <property type="match status" value="1"/>
</dbReference>
<dbReference type="PANTHER" id="PTHR12526:SF590">
    <property type="entry name" value="ALPHA-MALTOSE-1-PHOSPHATE SYNTHASE"/>
    <property type="match status" value="1"/>
</dbReference>
<dbReference type="PANTHER" id="PTHR12526">
    <property type="entry name" value="GLYCOSYLTRANSFERASE"/>
    <property type="match status" value="1"/>
</dbReference>
<dbReference type="Pfam" id="PF13439">
    <property type="entry name" value="Glyco_transf_4"/>
    <property type="match status" value="1"/>
</dbReference>
<dbReference type="Pfam" id="PF00534">
    <property type="entry name" value="Glycos_transf_1"/>
    <property type="match status" value="1"/>
</dbReference>
<dbReference type="SUPFAM" id="SSF53756">
    <property type="entry name" value="UDP-Glycosyltransferase/glycogen phosphorylase"/>
    <property type="match status" value="1"/>
</dbReference>